<proteinExistence type="inferred from homology"/>
<sequence>MSLKHFLNTQDWSRAELDALLTQAALFKRNKLGSELKGKSIALVFFNPSMRTRTSFELGAFQLGGHAVVLQPGKDAWPIEFNLGTVMDGDTEEHIAEVARVLGRYVDLIGVRAFPKFVDWSKDREDQVLKSFAKYSPVPVINMETITHPCQELAHALALQEHFGTQDLRGKKYVLTWTYHPKPLNTAVANSALTIATRMGMDVTLLCPTPDYILDQRYMDWAAQNVVESGGSLQVSHDIDSAYAGADVVYAKSWGALPFFGNWEPEKPIRDQYQHFIVDERKMALTNNGVFSHCLPLRRNVKATDAVMDSPNCIAIDEAENRLHVQKAIMAALASQAGIGNRE</sequence>
<name>AOTC_XANAC</name>
<comment type="function">
    <text evidence="1">Catalyzes the transfer of the carbamoyl group from carbamoyl phosphate to the delta-amino group of N(2)-acetyl-L-ornithine to produce N(2)-acetyl-L-citrulline. This is a step in an alternative arginine biosynthesis pathway. The enzyme has no activity with ornithine.</text>
</comment>
<comment type="catalytic activity">
    <reaction evidence="1">
        <text>N(2)-acetyl-L-ornithine + carbamoyl phosphate = N(2)-acetyl-L-citrulline + phosphate + H(+)</text>
        <dbReference type="Rhea" id="RHEA:18609"/>
        <dbReference type="ChEBI" id="CHEBI:15378"/>
        <dbReference type="ChEBI" id="CHEBI:43474"/>
        <dbReference type="ChEBI" id="CHEBI:57805"/>
        <dbReference type="ChEBI" id="CHEBI:58228"/>
        <dbReference type="ChEBI" id="CHEBI:58765"/>
        <dbReference type="EC" id="2.1.3.9"/>
    </reaction>
    <physiologicalReaction direction="left-to-right" evidence="1">
        <dbReference type="Rhea" id="RHEA:18610"/>
    </physiologicalReaction>
</comment>
<comment type="activity regulation">
    <text evidence="1">Carboxylation at Lys-302 increases the catalytic activity of the enzyme.</text>
</comment>
<comment type="pathway">
    <text evidence="1">Amino-acid biosynthesis; L-arginine biosynthesis.</text>
</comment>
<comment type="subunit">
    <text evidence="1">Homotrimer.</text>
</comment>
<comment type="subcellular location">
    <subcellularLocation>
        <location evidence="3">Cytoplasm</location>
    </subcellularLocation>
</comment>
<comment type="similarity">
    <text evidence="2 3">Belongs to the aspartate/ornithine carbamoyltransferase superfamily. AOTCase family.</text>
</comment>
<reference key="1">
    <citation type="journal article" date="2002" name="Nature">
        <title>Comparison of the genomes of two Xanthomonas pathogens with differing host specificities.</title>
        <authorList>
            <person name="da Silva A.C.R."/>
            <person name="Ferro J.A."/>
            <person name="Reinach F.C."/>
            <person name="Farah C.S."/>
            <person name="Furlan L.R."/>
            <person name="Quaggio R.B."/>
            <person name="Monteiro-Vitorello C.B."/>
            <person name="Van Sluys M.A."/>
            <person name="Almeida N.F. Jr."/>
            <person name="Alves L.M.C."/>
            <person name="do Amaral A.M."/>
            <person name="Bertolini M.C."/>
            <person name="Camargo L.E.A."/>
            <person name="Camarotte G."/>
            <person name="Cannavan F."/>
            <person name="Cardozo J."/>
            <person name="Chambergo F."/>
            <person name="Ciapina L.P."/>
            <person name="Cicarelli R.M.B."/>
            <person name="Coutinho L.L."/>
            <person name="Cursino-Santos J.R."/>
            <person name="El-Dorry H."/>
            <person name="Faria J.B."/>
            <person name="Ferreira A.J.S."/>
            <person name="Ferreira R.C.C."/>
            <person name="Ferro M.I.T."/>
            <person name="Formighieri E.F."/>
            <person name="Franco M.C."/>
            <person name="Greggio C.C."/>
            <person name="Gruber A."/>
            <person name="Katsuyama A.M."/>
            <person name="Kishi L.T."/>
            <person name="Leite R.P."/>
            <person name="Lemos E.G.M."/>
            <person name="Lemos M.V.F."/>
            <person name="Locali E.C."/>
            <person name="Machado M.A."/>
            <person name="Madeira A.M.B.N."/>
            <person name="Martinez-Rossi N.M."/>
            <person name="Martins E.C."/>
            <person name="Meidanis J."/>
            <person name="Menck C.F.M."/>
            <person name="Miyaki C.Y."/>
            <person name="Moon D.H."/>
            <person name="Moreira L.M."/>
            <person name="Novo M.T.M."/>
            <person name="Okura V.K."/>
            <person name="Oliveira M.C."/>
            <person name="Oliveira V.R."/>
            <person name="Pereira H.A."/>
            <person name="Rossi A."/>
            <person name="Sena J.A.D."/>
            <person name="Silva C."/>
            <person name="de Souza R.F."/>
            <person name="Spinola L.A.F."/>
            <person name="Takita M.A."/>
            <person name="Tamura R.E."/>
            <person name="Teixeira E.C."/>
            <person name="Tezza R.I.D."/>
            <person name="Trindade dos Santos M."/>
            <person name="Truffi D."/>
            <person name="Tsai S.M."/>
            <person name="White F.F."/>
            <person name="Setubal J.C."/>
            <person name="Kitajima J.P."/>
        </authorList>
    </citation>
    <scope>NUCLEOTIDE SEQUENCE [LARGE SCALE GENOMIC DNA]</scope>
    <source>
        <strain>306</strain>
    </source>
</reference>
<accession>Q8PK25</accession>
<evidence type="ECO:0000250" key="1">
    <source>
        <dbReference type="UniProtKB" id="Q8P8J2"/>
    </source>
</evidence>
<evidence type="ECO:0000255" key="2">
    <source>
        <dbReference type="HAMAP-Rule" id="MF_02234"/>
    </source>
</evidence>
<evidence type="ECO:0000305" key="3"/>
<organism>
    <name type="scientific">Xanthomonas axonopodis pv. citri (strain 306)</name>
    <dbReference type="NCBI Taxonomy" id="190486"/>
    <lineage>
        <taxon>Bacteria</taxon>
        <taxon>Pseudomonadati</taxon>
        <taxon>Pseudomonadota</taxon>
        <taxon>Gammaproteobacteria</taxon>
        <taxon>Lysobacterales</taxon>
        <taxon>Lysobacteraceae</taxon>
        <taxon>Xanthomonas</taxon>
    </lineage>
</organism>
<keyword id="KW-0028">Amino-acid biosynthesis</keyword>
<keyword id="KW-0055">Arginine biosynthesis</keyword>
<keyword id="KW-0963">Cytoplasm</keyword>
<keyword id="KW-0808">Transferase</keyword>
<gene>
    <name evidence="2" type="primary">argF'</name>
    <name type="ordered locus">XAC2352</name>
</gene>
<protein>
    <recommendedName>
        <fullName evidence="1">N-acetylornithine carbamoyltransferase</fullName>
        <ecNumber evidence="1">2.1.3.9</ecNumber>
    </recommendedName>
    <alternativeName>
        <fullName evidence="2">N-acetyl-L-ornithine transcarbamylase</fullName>
        <shortName evidence="2">AOTCase</shortName>
        <shortName evidence="2">Acetylornithine transcarbamylase</shortName>
    </alternativeName>
</protein>
<feature type="chain" id="PRO_0000113267" description="N-acetylornithine carbamoyltransferase">
    <location>
        <begin position="1"/>
        <end position="343"/>
    </location>
</feature>
<feature type="binding site" description="in other chain" evidence="1">
    <location>
        <begin position="49"/>
        <end position="52"/>
    </location>
    <ligand>
        <name>carbamoyl phosphate</name>
        <dbReference type="ChEBI" id="CHEBI:58228"/>
        <note>ligand shared between two neighboring subunits</note>
    </ligand>
</feature>
<feature type="binding site" evidence="1">
    <location>
        <position position="77"/>
    </location>
    <ligand>
        <name>carbamoyl phosphate</name>
        <dbReference type="ChEBI" id="CHEBI:58228"/>
        <note>ligand shared between two neighboring subunits</note>
    </ligand>
</feature>
<feature type="binding site" description="in other chain" evidence="1">
    <location>
        <position position="112"/>
    </location>
    <ligand>
        <name>carbamoyl phosphate</name>
        <dbReference type="ChEBI" id="CHEBI:58228"/>
        <note>ligand shared between two neighboring subunits</note>
    </ligand>
</feature>
<feature type="binding site" evidence="1">
    <location>
        <position position="144"/>
    </location>
    <ligand>
        <name>N(2)-acetyl-L-ornithine</name>
        <dbReference type="ChEBI" id="CHEBI:57805"/>
    </ligand>
</feature>
<feature type="binding site" description="in other chain" evidence="1">
    <location>
        <begin position="148"/>
        <end position="151"/>
    </location>
    <ligand>
        <name>carbamoyl phosphate</name>
        <dbReference type="ChEBI" id="CHEBI:58228"/>
        <note>ligand shared between two neighboring subunits</note>
    </ligand>
</feature>
<feature type="binding site" evidence="1">
    <location>
        <position position="252"/>
    </location>
    <ligand>
        <name>N(2)-acetyl-L-ornithine</name>
        <dbReference type="ChEBI" id="CHEBI:57805"/>
    </ligand>
</feature>
<feature type="binding site" description="in other chain" evidence="1">
    <location>
        <begin position="294"/>
        <end position="295"/>
    </location>
    <ligand>
        <name>carbamoyl phosphate</name>
        <dbReference type="ChEBI" id="CHEBI:58228"/>
        <note>ligand shared between two neighboring subunits</note>
    </ligand>
</feature>
<feature type="binding site" evidence="1">
    <location>
        <position position="295"/>
    </location>
    <ligand>
        <name>N(2)-acetyl-L-ornithine</name>
        <dbReference type="ChEBI" id="CHEBI:57805"/>
    </ligand>
</feature>
<feature type="binding site" description="in other chain" evidence="1">
    <location>
        <position position="322"/>
    </location>
    <ligand>
        <name>carbamoyl phosphate</name>
        <dbReference type="ChEBI" id="CHEBI:58228"/>
        <note>ligand shared between two neighboring subunits</note>
    </ligand>
</feature>
<feature type="site" description="Key residue in conferring substrate specificity for N-acetyl-L-ornithine versus N-succinyl-L-ornithine" evidence="1">
    <location>
        <position position="92"/>
    </location>
</feature>
<feature type="modified residue" description="N6-carboxylysine" evidence="1">
    <location>
        <position position="302"/>
    </location>
</feature>
<dbReference type="EC" id="2.1.3.9" evidence="1"/>
<dbReference type="EMBL" id="AE008923">
    <property type="protein sequence ID" value="AAM37204.1"/>
    <property type="molecule type" value="Genomic_DNA"/>
</dbReference>
<dbReference type="RefSeq" id="WP_003486947.1">
    <property type="nucleotide sequence ID" value="NC_003919.1"/>
</dbReference>
<dbReference type="SMR" id="Q8PK25"/>
<dbReference type="KEGG" id="xac:XAC2352"/>
<dbReference type="eggNOG" id="COG0078">
    <property type="taxonomic scope" value="Bacteria"/>
</dbReference>
<dbReference type="HOGENOM" id="CLU_043846_3_3_6"/>
<dbReference type="UniPathway" id="UPA00068"/>
<dbReference type="Proteomes" id="UP000000576">
    <property type="component" value="Chromosome"/>
</dbReference>
<dbReference type="GO" id="GO:0005737">
    <property type="term" value="C:cytoplasm"/>
    <property type="evidence" value="ECO:0007669"/>
    <property type="project" value="UniProtKB-SubCell"/>
</dbReference>
<dbReference type="GO" id="GO:0016597">
    <property type="term" value="F:amino acid binding"/>
    <property type="evidence" value="ECO:0007669"/>
    <property type="project" value="InterPro"/>
</dbReference>
<dbReference type="GO" id="GO:0043857">
    <property type="term" value="F:N-acetylornithine carbamoyltransferase activity"/>
    <property type="evidence" value="ECO:0007669"/>
    <property type="project" value="UniProtKB-UniRule"/>
</dbReference>
<dbReference type="GO" id="GO:0004585">
    <property type="term" value="F:ornithine carbamoyltransferase activity"/>
    <property type="evidence" value="ECO:0007669"/>
    <property type="project" value="TreeGrafter"/>
</dbReference>
<dbReference type="GO" id="GO:0042450">
    <property type="term" value="P:arginine biosynthetic process via ornithine"/>
    <property type="evidence" value="ECO:0007669"/>
    <property type="project" value="InterPro"/>
</dbReference>
<dbReference type="GO" id="GO:0019240">
    <property type="term" value="P:citrulline biosynthetic process"/>
    <property type="evidence" value="ECO:0007669"/>
    <property type="project" value="TreeGrafter"/>
</dbReference>
<dbReference type="GO" id="GO:0006526">
    <property type="term" value="P:L-arginine biosynthetic process"/>
    <property type="evidence" value="ECO:0007669"/>
    <property type="project" value="UniProtKB-UniRule"/>
</dbReference>
<dbReference type="FunFam" id="3.40.50.1370:FF:000018">
    <property type="entry name" value="Acetylornithine carbamoyltransferase"/>
    <property type="match status" value="1"/>
</dbReference>
<dbReference type="FunFam" id="3.40.50.1370:FF:000020">
    <property type="entry name" value="Acetylornithine carbamoyltransferase"/>
    <property type="match status" value="1"/>
</dbReference>
<dbReference type="Gene3D" id="3.40.50.1370">
    <property type="entry name" value="Aspartate/ornithine carbamoyltransferase"/>
    <property type="match status" value="2"/>
</dbReference>
<dbReference type="HAMAP" id="MF_02234">
    <property type="entry name" value="AOTCase"/>
    <property type="match status" value="1"/>
</dbReference>
<dbReference type="InterPro" id="IPR043695">
    <property type="entry name" value="ArgF"/>
</dbReference>
<dbReference type="InterPro" id="IPR006132">
    <property type="entry name" value="Asp/Orn_carbamoyltranf_P-bd"/>
</dbReference>
<dbReference type="InterPro" id="IPR006130">
    <property type="entry name" value="Asp/Orn_carbamoylTrfase"/>
</dbReference>
<dbReference type="InterPro" id="IPR036901">
    <property type="entry name" value="Asp/Orn_carbamoylTrfase_sf"/>
</dbReference>
<dbReference type="InterPro" id="IPR006131">
    <property type="entry name" value="Asp_carbamoyltransf_Asp/Orn-bd"/>
</dbReference>
<dbReference type="NCBIfam" id="NF003384">
    <property type="entry name" value="PRK04523.1"/>
    <property type="match status" value="1"/>
</dbReference>
<dbReference type="PANTHER" id="PTHR45753">
    <property type="entry name" value="ORNITHINE CARBAMOYLTRANSFERASE, MITOCHONDRIAL"/>
    <property type="match status" value="1"/>
</dbReference>
<dbReference type="PANTHER" id="PTHR45753:SF3">
    <property type="entry name" value="ORNITHINE TRANSCARBAMYLASE, MITOCHONDRIAL"/>
    <property type="match status" value="1"/>
</dbReference>
<dbReference type="Pfam" id="PF00185">
    <property type="entry name" value="OTCace"/>
    <property type="match status" value="1"/>
</dbReference>
<dbReference type="Pfam" id="PF02729">
    <property type="entry name" value="OTCace_N"/>
    <property type="match status" value="1"/>
</dbReference>
<dbReference type="PRINTS" id="PR00100">
    <property type="entry name" value="AOTCASE"/>
</dbReference>
<dbReference type="PRINTS" id="PR00101">
    <property type="entry name" value="ATCASE"/>
</dbReference>
<dbReference type="SUPFAM" id="SSF53671">
    <property type="entry name" value="Aspartate/ornithine carbamoyltransferase"/>
    <property type="match status" value="1"/>
</dbReference>